<feature type="chain" id="PRO_0000196917" description="2,3,4,5-tetrahydropyridine-2,6-dicarboxylate N-succinyltransferase">
    <location>
        <begin position="1"/>
        <end position="273"/>
    </location>
</feature>
<feature type="binding site" evidence="1">
    <location>
        <position position="105"/>
    </location>
    <ligand>
        <name>substrate</name>
    </ligand>
</feature>
<feature type="binding site" evidence="1">
    <location>
        <position position="142"/>
    </location>
    <ligand>
        <name>substrate</name>
    </ligand>
</feature>
<accession>Q7W8Y2</accession>
<organism>
    <name type="scientific">Bordetella parapertussis (strain 12822 / ATCC BAA-587 / NCTC 13253)</name>
    <dbReference type="NCBI Taxonomy" id="257311"/>
    <lineage>
        <taxon>Bacteria</taxon>
        <taxon>Pseudomonadati</taxon>
        <taxon>Pseudomonadota</taxon>
        <taxon>Betaproteobacteria</taxon>
        <taxon>Burkholderiales</taxon>
        <taxon>Alcaligenaceae</taxon>
        <taxon>Bordetella</taxon>
    </lineage>
</organism>
<reference key="1">
    <citation type="journal article" date="2003" name="Nat. Genet.">
        <title>Comparative analysis of the genome sequences of Bordetella pertussis, Bordetella parapertussis and Bordetella bronchiseptica.</title>
        <authorList>
            <person name="Parkhill J."/>
            <person name="Sebaihia M."/>
            <person name="Preston A."/>
            <person name="Murphy L.D."/>
            <person name="Thomson N.R."/>
            <person name="Harris D.E."/>
            <person name="Holden M.T.G."/>
            <person name="Churcher C.M."/>
            <person name="Bentley S.D."/>
            <person name="Mungall K.L."/>
            <person name="Cerdeno-Tarraga A.-M."/>
            <person name="Temple L."/>
            <person name="James K.D."/>
            <person name="Harris B."/>
            <person name="Quail M.A."/>
            <person name="Achtman M."/>
            <person name="Atkin R."/>
            <person name="Baker S."/>
            <person name="Basham D."/>
            <person name="Bason N."/>
            <person name="Cherevach I."/>
            <person name="Chillingworth T."/>
            <person name="Collins M."/>
            <person name="Cronin A."/>
            <person name="Davis P."/>
            <person name="Doggett J."/>
            <person name="Feltwell T."/>
            <person name="Goble A."/>
            <person name="Hamlin N."/>
            <person name="Hauser H."/>
            <person name="Holroyd S."/>
            <person name="Jagels K."/>
            <person name="Leather S."/>
            <person name="Moule S."/>
            <person name="Norberczak H."/>
            <person name="O'Neil S."/>
            <person name="Ormond D."/>
            <person name="Price C."/>
            <person name="Rabbinowitsch E."/>
            <person name="Rutter S."/>
            <person name="Sanders M."/>
            <person name="Saunders D."/>
            <person name="Seeger K."/>
            <person name="Sharp S."/>
            <person name="Simmonds M."/>
            <person name="Skelton J."/>
            <person name="Squares R."/>
            <person name="Squares S."/>
            <person name="Stevens K."/>
            <person name="Unwin L."/>
            <person name="Whitehead S."/>
            <person name="Barrell B.G."/>
            <person name="Maskell D.J."/>
        </authorList>
    </citation>
    <scope>NUCLEOTIDE SEQUENCE [LARGE SCALE GENOMIC DNA]</scope>
    <source>
        <strain>12822 / ATCC BAA-587 / NCTC 13253</strain>
    </source>
</reference>
<comment type="catalytic activity">
    <reaction evidence="1">
        <text>(S)-2,3,4,5-tetrahydrodipicolinate + succinyl-CoA + H2O = (S)-2-succinylamino-6-oxoheptanedioate + CoA</text>
        <dbReference type="Rhea" id="RHEA:17325"/>
        <dbReference type="ChEBI" id="CHEBI:15377"/>
        <dbReference type="ChEBI" id="CHEBI:15685"/>
        <dbReference type="ChEBI" id="CHEBI:16845"/>
        <dbReference type="ChEBI" id="CHEBI:57287"/>
        <dbReference type="ChEBI" id="CHEBI:57292"/>
        <dbReference type="EC" id="2.3.1.117"/>
    </reaction>
</comment>
<comment type="pathway">
    <text evidence="1">Amino-acid biosynthesis; L-lysine biosynthesis via DAP pathway; LL-2,6-diaminopimelate from (S)-tetrahydrodipicolinate (succinylase route): step 1/3.</text>
</comment>
<comment type="subunit">
    <text evidence="1">Homotrimer.</text>
</comment>
<comment type="subcellular location">
    <subcellularLocation>
        <location evidence="1">Cytoplasm</location>
    </subcellularLocation>
</comment>
<comment type="similarity">
    <text evidence="1">Belongs to the transferase hexapeptide repeat family.</text>
</comment>
<keyword id="KW-0012">Acyltransferase</keyword>
<keyword id="KW-0028">Amino-acid biosynthesis</keyword>
<keyword id="KW-0963">Cytoplasm</keyword>
<keyword id="KW-0220">Diaminopimelate biosynthesis</keyword>
<keyword id="KW-0457">Lysine biosynthesis</keyword>
<keyword id="KW-0677">Repeat</keyword>
<keyword id="KW-0808">Transferase</keyword>
<protein>
    <recommendedName>
        <fullName evidence="1">2,3,4,5-tetrahydropyridine-2,6-dicarboxylate N-succinyltransferase</fullName>
        <ecNumber evidence="1">2.3.1.117</ecNumber>
    </recommendedName>
    <alternativeName>
        <fullName evidence="1">Tetrahydrodipicolinate N-succinyltransferase</fullName>
        <shortName evidence="1">THDP succinyltransferase</shortName>
        <shortName evidence="1">THP succinyltransferase</shortName>
        <shortName evidence="1">Tetrahydropicolinate succinylase</shortName>
    </alternativeName>
</protein>
<evidence type="ECO:0000255" key="1">
    <source>
        <dbReference type="HAMAP-Rule" id="MF_00811"/>
    </source>
</evidence>
<proteinExistence type="inferred from homology"/>
<name>DAPD_BORPA</name>
<dbReference type="EC" id="2.3.1.117" evidence="1"/>
<dbReference type="EMBL" id="BX640429">
    <property type="protein sequence ID" value="CAE37295.1"/>
    <property type="molecule type" value="Genomic_DNA"/>
</dbReference>
<dbReference type="RefSeq" id="WP_010928312.1">
    <property type="nucleotide sequence ID" value="NC_002928.3"/>
</dbReference>
<dbReference type="SMR" id="Q7W8Y2"/>
<dbReference type="GeneID" id="93203768"/>
<dbReference type="KEGG" id="bpa:BPP1995"/>
<dbReference type="HOGENOM" id="CLU_050859_0_1_4"/>
<dbReference type="UniPathway" id="UPA00034">
    <property type="reaction ID" value="UER00019"/>
</dbReference>
<dbReference type="Proteomes" id="UP000001421">
    <property type="component" value="Chromosome"/>
</dbReference>
<dbReference type="GO" id="GO:0005737">
    <property type="term" value="C:cytoplasm"/>
    <property type="evidence" value="ECO:0007669"/>
    <property type="project" value="UniProtKB-SubCell"/>
</dbReference>
<dbReference type="GO" id="GO:0008666">
    <property type="term" value="F:2,3,4,5-tetrahydropyridine-2,6-dicarboxylate N-succinyltransferase activity"/>
    <property type="evidence" value="ECO:0007669"/>
    <property type="project" value="UniProtKB-UniRule"/>
</dbReference>
<dbReference type="GO" id="GO:0016779">
    <property type="term" value="F:nucleotidyltransferase activity"/>
    <property type="evidence" value="ECO:0007669"/>
    <property type="project" value="TreeGrafter"/>
</dbReference>
<dbReference type="GO" id="GO:0019877">
    <property type="term" value="P:diaminopimelate biosynthetic process"/>
    <property type="evidence" value="ECO:0007669"/>
    <property type="project" value="UniProtKB-UniRule"/>
</dbReference>
<dbReference type="GO" id="GO:0009089">
    <property type="term" value="P:lysine biosynthetic process via diaminopimelate"/>
    <property type="evidence" value="ECO:0007669"/>
    <property type="project" value="UniProtKB-UniRule"/>
</dbReference>
<dbReference type="CDD" id="cd03350">
    <property type="entry name" value="LbH_THP_succinylT"/>
    <property type="match status" value="1"/>
</dbReference>
<dbReference type="Gene3D" id="2.160.10.10">
    <property type="entry name" value="Hexapeptide repeat proteins"/>
    <property type="match status" value="1"/>
</dbReference>
<dbReference type="Gene3D" id="1.10.166.10">
    <property type="entry name" value="Tetrahydrodipicolinate-N-succinyltransferase, N-terminal domain"/>
    <property type="match status" value="1"/>
</dbReference>
<dbReference type="HAMAP" id="MF_00811">
    <property type="entry name" value="DapD"/>
    <property type="match status" value="1"/>
</dbReference>
<dbReference type="InterPro" id="IPR005664">
    <property type="entry name" value="DapD_Trfase_Hexpep_rpt_fam"/>
</dbReference>
<dbReference type="InterPro" id="IPR001451">
    <property type="entry name" value="Hexapep"/>
</dbReference>
<dbReference type="InterPro" id="IPR018357">
    <property type="entry name" value="Hexapep_transf_CS"/>
</dbReference>
<dbReference type="InterPro" id="IPR023180">
    <property type="entry name" value="THP_succinylTrfase_dom1"/>
</dbReference>
<dbReference type="InterPro" id="IPR037133">
    <property type="entry name" value="THP_succinylTrfase_N_sf"/>
</dbReference>
<dbReference type="InterPro" id="IPR011004">
    <property type="entry name" value="Trimer_LpxA-like_sf"/>
</dbReference>
<dbReference type="NCBIfam" id="TIGR00965">
    <property type="entry name" value="dapD"/>
    <property type="match status" value="1"/>
</dbReference>
<dbReference type="NCBIfam" id="NF008808">
    <property type="entry name" value="PRK11830.1"/>
    <property type="match status" value="1"/>
</dbReference>
<dbReference type="PANTHER" id="PTHR19136:SF52">
    <property type="entry name" value="2,3,4,5-TETRAHYDROPYRIDINE-2,6-DICARBOXYLATE N-SUCCINYLTRANSFERASE"/>
    <property type="match status" value="1"/>
</dbReference>
<dbReference type="PANTHER" id="PTHR19136">
    <property type="entry name" value="MOLYBDENUM COFACTOR GUANYLYLTRANSFERASE"/>
    <property type="match status" value="1"/>
</dbReference>
<dbReference type="Pfam" id="PF14602">
    <property type="entry name" value="Hexapep_2"/>
    <property type="match status" value="1"/>
</dbReference>
<dbReference type="Pfam" id="PF14805">
    <property type="entry name" value="THDPS_N_2"/>
    <property type="match status" value="1"/>
</dbReference>
<dbReference type="SUPFAM" id="SSF51161">
    <property type="entry name" value="Trimeric LpxA-like enzymes"/>
    <property type="match status" value="1"/>
</dbReference>
<dbReference type="PROSITE" id="PS00101">
    <property type="entry name" value="HEXAPEP_TRANSFERASES"/>
    <property type="match status" value="1"/>
</dbReference>
<sequence length="273" mass="29294">MTLDLQTTIEQAWENRANLSPVDASAEVRDAVEHTIDGLDLGRLRVAEKIDDQWIVHQWIKKAVLLSFRLHDNAVMGQGPLQFYDKVPTKFAGYGEAAFKAGGYRVVPPAVARRGAFIARNVVLMPSYVNIGAYVDEGTMVDTWATVGSCAQIGKNVHLSGGVGIGGVLEPLQANPTIIEDNCFIGARSEVVEGVVVEENSVLAMGVFLSQSTKIYDRATGKVSYGRVPSGSVVVPGSLPSEDGSHSLTCAVIVKRVDAQTRAKTSINDLLRA</sequence>
<gene>
    <name evidence="1" type="primary">dapD</name>
    <name type="ordered locus">BPP1995</name>
</gene>